<comment type="function">
    <text evidence="1">Is absolutely required for pilus biogenesis, and for EPEC localized adherence and autoaggregation. Acts at a step in the BFP biogenic pathway after production and processing of the structural pilus subunit BfpA (By similarity).</text>
</comment>
<comment type="subcellular location">
    <subcellularLocation>
        <location evidence="1">Cell outer membrane</location>
        <topology evidence="2">Lipid-anchor</topology>
    </subcellularLocation>
</comment>
<comment type="similarity">
    <text evidence="4">Belongs to the bacterial secretin family.</text>
</comment>
<organism>
    <name type="scientific">Escherichia coli O127:H6 (strain E2348/69 / EPEC)</name>
    <dbReference type="NCBI Taxonomy" id="574521"/>
    <lineage>
        <taxon>Bacteria</taxon>
        <taxon>Pseudomonadati</taxon>
        <taxon>Pseudomonadota</taxon>
        <taxon>Gammaproteobacteria</taxon>
        <taxon>Enterobacterales</taxon>
        <taxon>Enterobacteriaceae</taxon>
        <taxon>Escherichia</taxon>
    </lineage>
</organism>
<geneLocation type="plasmid">
    <name>pMAR2</name>
</geneLocation>
<gene>
    <name type="primary">bfpB</name>
    <name type="ordered locus">E2348_P1_005</name>
</gene>
<proteinExistence type="inferred from homology"/>
<sequence>MKLGRYSLFLLCPLLASCSGNGFYKDNLGVIDKNILHADTSLLKSKNKEHYKSSDMVSKTDSIYIGNSSFQTYHGEPLPGKLEGVHGIILRSSTPLGFDEVLSMIQDSSGIPIVKHTTKDVISGGVSSKSLAATVAEKMNSATGGKSTDQFDHLLLEVSSEHQLMDVNYQGALSTFLDKVAANYNLYWTYESGRIAFSNEETKRFSISILPGGKYTSKNSISSDSNSSSGSSGSSGSSSSDSGAELKFDSDVDFWKDIENSIKLILGSDGSYSISTSTSSVIVRTSSANMKKINEYINTLNAQLERQVTIDVAIYNVTTTDSSDLAMSLEALLKHNGGVLGSVSTSNFAATSGTPSFTGYLNGNGDSSNQVLLNLLAEKGKVSVVTSASVTTMSGQPVPLKVGNDRTYVSEIGTVLSQSSTSTTASTSTVTSGFLMNLLPQVADDGNILLQYGVTLSELVGSNNGFDQATVNGTVIQLPNVDSTTFVQSSMLRNGNTLVLAGYEKKRNESVDQGVGTTSFKLLGGALNGSASRTVTVICITPRIIDLKASGE</sequence>
<reference key="1">
    <citation type="journal article" date="1996" name="Mol. Microbiol.">
        <title>A cluster of fourteen genes from enteropathogenic Escherichia coli is sufficient for the biogenesis of a type IV pilus.</title>
        <authorList>
            <person name="Stone K.D."/>
            <person name="Zhang H."/>
            <person name="Carlson L.K."/>
            <person name="Donnenberg M.S."/>
        </authorList>
    </citation>
    <scope>NUCLEOTIDE SEQUENCE [GENOMIC DNA]</scope>
</reference>
<reference key="2">
    <citation type="journal article" date="2009" name="J. Bacteriol.">
        <title>Complete genome sequence and comparative genome analysis of enteropathogenic Escherichia coli O127:H6 strain E2348/69.</title>
        <authorList>
            <person name="Iguchi A."/>
            <person name="Thomson N.R."/>
            <person name="Ogura Y."/>
            <person name="Saunders D."/>
            <person name="Ooka T."/>
            <person name="Henderson I.R."/>
            <person name="Harris D."/>
            <person name="Asadulghani M."/>
            <person name="Kurokawa K."/>
            <person name="Dean P."/>
            <person name="Kenny B."/>
            <person name="Quail M.A."/>
            <person name="Thurston S."/>
            <person name="Dougan G."/>
            <person name="Hayashi T."/>
            <person name="Parkhill J."/>
            <person name="Frankel G."/>
        </authorList>
    </citation>
    <scope>NUCLEOTIDE SEQUENCE [LARGE SCALE GENOMIC DNA]</scope>
    <source>
        <strain>E2348/69 / EPEC</strain>
    </source>
</reference>
<dbReference type="EMBL" id="Z68186">
    <property type="protein sequence ID" value="CAA92328.1"/>
    <property type="molecule type" value="Genomic_DNA"/>
</dbReference>
<dbReference type="EMBL" id="FM180569">
    <property type="protein sequence ID" value="CAS07441.1"/>
    <property type="molecule type" value="Genomic_DNA"/>
</dbReference>
<dbReference type="PIR" id="S70968">
    <property type="entry name" value="S70968"/>
</dbReference>
<dbReference type="RefSeq" id="WP_000766020.1">
    <property type="nucleotide sequence ID" value="NC_011603.1"/>
</dbReference>
<dbReference type="KEGG" id="ecg:E2348_P1_005"/>
<dbReference type="HOGENOM" id="CLU_015882_0_0_6"/>
<dbReference type="Proteomes" id="UP000008205">
    <property type="component" value="Plasmid pMAR2"/>
</dbReference>
<dbReference type="GO" id="GO:0009279">
    <property type="term" value="C:cell outer membrane"/>
    <property type="evidence" value="ECO:0007669"/>
    <property type="project" value="UniProtKB-SubCell"/>
</dbReference>
<dbReference type="GO" id="GO:0009297">
    <property type="term" value="P:pilus assembly"/>
    <property type="evidence" value="ECO:0007669"/>
    <property type="project" value="InterPro"/>
</dbReference>
<dbReference type="GO" id="GO:0009306">
    <property type="term" value="P:protein secretion"/>
    <property type="evidence" value="ECO:0007669"/>
    <property type="project" value="InterPro"/>
</dbReference>
<dbReference type="InterPro" id="IPR050810">
    <property type="entry name" value="Bact_Secretion_Sys_Channel"/>
</dbReference>
<dbReference type="InterPro" id="IPR011514">
    <property type="entry name" value="Secretin_N_2"/>
</dbReference>
<dbReference type="InterPro" id="IPR004846">
    <property type="entry name" value="T2SS/T3SS_dom"/>
</dbReference>
<dbReference type="PANTHER" id="PTHR30332">
    <property type="entry name" value="PROBABLE GENERAL SECRETION PATHWAY PROTEIN D"/>
    <property type="match status" value="1"/>
</dbReference>
<dbReference type="PANTHER" id="PTHR30332:SF24">
    <property type="entry name" value="SECRETIN GSPD-RELATED"/>
    <property type="match status" value="1"/>
</dbReference>
<dbReference type="Pfam" id="PF00263">
    <property type="entry name" value="Secretin"/>
    <property type="match status" value="1"/>
</dbReference>
<dbReference type="Pfam" id="PF07655">
    <property type="entry name" value="Secretin_N_2"/>
    <property type="match status" value="1"/>
</dbReference>
<dbReference type="PROSITE" id="PS51257">
    <property type="entry name" value="PROKAR_LIPOPROTEIN"/>
    <property type="match status" value="1"/>
</dbReference>
<accession>Q47068</accession>
<accession>B7UTD3</accession>
<keyword id="KW-0998">Cell outer membrane</keyword>
<keyword id="KW-1029">Fimbrium biogenesis</keyword>
<keyword id="KW-0449">Lipoprotein</keyword>
<keyword id="KW-0472">Membrane</keyword>
<keyword id="KW-0564">Palmitate</keyword>
<keyword id="KW-0614">Plasmid</keyword>
<keyword id="KW-1185">Reference proteome</keyword>
<keyword id="KW-0732">Signal</keyword>
<protein>
    <recommendedName>
        <fullName>Outer membrane lipoprotein BfpB</fullName>
    </recommendedName>
    <alternativeName>
        <fullName>Bundle-forming pilus B</fullName>
    </alternativeName>
</protein>
<name>BFPB_ECO27</name>
<feature type="signal peptide" evidence="2">
    <location>
        <begin position="1"/>
        <end position="17"/>
    </location>
</feature>
<feature type="chain" id="PRO_0000020807" description="Outer membrane lipoprotein BfpB">
    <location>
        <begin position="18"/>
        <end position="552"/>
    </location>
</feature>
<feature type="region of interest" description="Disordered" evidence="3">
    <location>
        <begin position="218"/>
        <end position="244"/>
    </location>
</feature>
<feature type="compositionally biased region" description="Low complexity" evidence="3">
    <location>
        <begin position="218"/>
        <end position="243"/>
    </location>
</feature>
<feature type="lipid moiety-binding region" description="N-palmitoyl cysteine" evidence="2">
    <location>
        <position position="18"/>
    </location>
</feature>
<feature type="lipid moiety-binding region" description="S-diacylglycerol cysteine" evidence="2">
    <location>
        <position position="18"/>
    </location>
</feature>
<feature type="sequence conflict" description="In Ref. 1; CAA92328." evidence="4" ref="1">
    <original>NLYWT</original>
    <variation>KPVLGQ</variation>
    <location>
        <begin position="185"/>
        <end position="189"/>
    </location>
</feature>
<evidence type="ECO:0000250" key="1"/>
<evidence type="ECO:0000255" key="2">
    <source>
        <dbReference type="PROSITE-ProRule" id="PRU00303"/>
    </source>
</evidence>
<evidence type="ECO:0000256" key="3">
    <source>
        <dbReference type="SAM" id="MobiDB-lite"/>
    </source>
</evidence>
<evidence type="ECO:0000305" key="4"/>